<evidence type="ECO:0000250" key="1"/>
<evidence type="ECO:0000305" key="2"/>
<name>SYC_MYCTO</name>
<gene>
    <name type="primary">cysS</name>
    <name type="synonym">cysS1</name>
    <name type="ordered locus">MT3686</name>
</gene>
<dbReference type="EC" id="6.1.1.16"/>
<dbReference type="EMBL" id="AE000516">
    <property type="protein sequence ID" value="AAK48044.1"/>
    <property type="molecule type" value="Genomic_DNA"/>
</dbReference>
<dbReference type="PIR" id="B70607">
    <property type="entry name" value="B70607"/>
</dbReference>
<dbReference type="RefSeq" id="WP_003917819.1">
    <property type="nucleotide sequence ID" value="NC_002755.2"/>
</dbReference>
<dbReference type="SMR" id="P9WFW0"/>
<dbReference type="KEGG" id="mtc:MT3686"/>
<dbReference type="PATRIC" id="fig|83331.31.peg.3969"/>
<dbReference type="HOGENOM" id="CLU_013528_0_1_11"/>
<dbReference type="Proteomes" id="UP000001020">
    <property type="component" value="Chromosome"/>
</dbReference>
<dbReference type="GO" id="GO:0005829">
    <property type="term" value="C:cytosol"/>
    <property type="evidence" value="ECO:0007669"/>
    <property type="project" value="TreeGrafter"/>
</dbReference>
<dbReference type="GO" id="GO:0005524">
    <property type="term" value="F:ATP binding"/>
    <property type="evidence" value="ECO:0007669"/>
    <property type="project" value="UniProtKB-UniRule"/>
</dbReference>
<dbReference type="GO" id="GO:0004817">
    <property type="term" value="F:cysteine-tRNA ligase activity"/>
    <property type="evidence" value="ECO:0007669"/>
    <property type="project" value="UniProtKB-UniRule"/>
</dbReference>
<dbReference type="GO" id="GO:0008270">
    <property type="term" value="F:zinc ion binding"/>
    <property type="evidence" value="ECO:0007669"/>
    <property type="project" value="UniProtKB-UniRule"/>
</dbReference>
<dbReference type="GO" id="GO:0006423">
    <property type="term" value="P:cysteinyl-tRNA aminoacylation"/>
    <property type="evidence" value="ECO:0007669"/>
    <property type="project" value="UniProtKB-UniRule"/>
</dbReference>
<dbReference type="CDD" id="cd00672">
    <property type="entry name" value="CysRS_core"/>
    <property type="match status" value="1"/>
</dbReference>
<dbReference type="FunFam" id="1.20.120.1910:FF:000006">
    <property type="entry name" value="Cysteine--tRNA ligase"/>
    <property type="match status" value="1"/>
</dbReference>
<dbReference type="FunFam" id="3.40.50.620:FF:000068">
    <property type="entry name" value="Cysteine--tRNA ligase"/>
    <property type="match status" value="1"/>
</dbReference>
<dbReference type="Gene3D" id="1.20.120.1910">
    <property type="entry name" value="Cysteine-tRNA ligase, C-terminal anti-codon recognition domain"/>
    <property type="match status" value="1"/>
</dbReference>
<dbReference type="Gene3D" id="3.40.50.620">
    <property type="entry name" value="HUPs"/>
    <property type="match status" value="1"/>
</dbReference>
<dbReference type="HAMAP" id="MF_00041">
    <property type="entry name" value="Cys_tRNA_synth"/>
    <property type="match status" value="1"/>
</dbReference>
<dbReference type="InterPro" id="IPR015803">
    <property type="entry name" value="Cys-tRNA-ligase"/>
</dbReference>
<dbReference type="InterPro" id="IPR015273">
    <property type="entry name" value="Cys-tRNA-synt_Ia_DALR"/>
</dbReference>
<dbReference type="InterPro" id="IPR024909">
    <property type="entry name" value="Cys-tRNA/MSH_ligase"/>
</dbReference>
<dbReference type="InterPro" id="IPR014729">
    <property type="entry name" value="Rossmann-like_a/b/a_fold"/>
</dbReference>
<dbReference type="InterPro" id="IPR032678">
    <property type="entry name" value="tRNA-synt_1_cat_dom"/>
</dbReference>
<dbReference type="InterPro" id="IPR009080">
    <property type="entry name" value="tRNAsynth_Ia_anticodon-bd"/>
</dbReference>
<dbReference type="NCBIfam" id="TIGR00435">
    <property type="entry name" value="cysS"/>
    <property type="match status" value="1"/>
</dbReference>
<dbReference type="PANTHER" id="PTHR10890:SF30">
    <property type="entry name" value="CYSTEINE--TRNA LIGASE"/>
    <property type="match status" value="1"/>
</dbReference>
<dbReference type="PANTHER" id="PTHR10890">
    <property type="entry name" value="CYSTEINYL-TRNA SYNTHETASE"/>
    <property type="match status" value="1"/>
</dbReference>
<dbReference type="Pfam" id="PF09190">
    <property type="entry name" value="DALR_2"/>
    <property type="match status" value="1"/>
</dbReference>
<dbReference type="Pfam" id="PF01406">
    <property type="entry name" value="tRNA-synt_1e"/>
    <property type="match status" value="1"/>
</dbReference>
<dbReference type="PRINTS" id="PR00983">
    <property type="entry name" value="TRNASYNTHCYS"/>
</dbReference>
<dbReference type="SMART" id="SM00840">
    <property type="entry name" value="DALR_2"/>
    <property type="match status" value="1"/>
</dbReference>
<dbReference type="SUPFAM" id="SSF47323">
    <property type="entry name" value="Anticodon-binding domain of a subclass of class I aminoacyl-tRNA synthetases"/>
    <property type="match status" value="1"/>
</dbReference>
<dbReference type="SUPFAM" id="SSF52374">
    <property type="entry name" value="Nucleotidylyl transferase"/>
    <property type="match status" value="1"/>
</dbReference>
<protein>
    <recommendedName>
        <fullName>Cysteine--tRNA ligase</fullName>
        <ecNumber>6.1.1.16</ecNumber>
    </recommendedName>
    <alternativeName>
        <fullName>Cysteinyl-tRNA synthetase</fullName>
        <shortName>CysRS</shortName>
    </alternativeName>
</protein>
<sequence length="469" mass="51869">MTDRARLRLHDTAAGVVRDFVPLRPGHVSIYLCGATVQGLPHIGHVRSGVAFDILRRWLLARGYDVAFIRNVTDIEDKILAKAAAAGRPWWEWAATHERAFTAAYDALDVLPPSAEPRATGHITQMIEMIERLIQAGHAYTGGGDVYFDVLSYPEYGQLSGHKIDDVHQGEGVAAGKRDQRDFTLWKGEKPGEPSWPTPWGRGRPGWHLECSAMARSYLGPEFDIHCGGMDLVFPHHENEIAQSRAAGDGFARYWLHNGWVTMGGEKMSKSLGNVLSMPAMLQRVRPAELRYYLGSAHYRSMLEFSETAMQDAVKAYVGLEDFLHRVRTRVGAVCPGDPTPRFAEALDDDLSVPIALAEIHHVRAEGNRALDAGDHDGALRSASAIRAMMGILGCDPLDQRWESRDETSAALAAVDVLVQAELQNREKAREQRNWALADEIRGRLKRAGIEVTDTAEGPQWSLLGGDTK</sequence>
<feature type="chain" id="PRO_0000428468" description="Cysteine--tRNA ligase">
    <location>
        <begin position="1"/>
        <end position="469"/>
    </location>
</feature>
<feature type="short sequence motif" description="'HIGH' region">
    <location>
        <begin position="35"/>
        <end position="45"/>
    </location>
</feature>
<feature type="short sequence motif" description="'KMSKS' region">
    <location>
        <begin position="267"/>
        <end position="271"/>
    </location>
</feature>
<feature type="binding site" evidence="1">
    <location>
        <position position="33"/>
    </location>
    <ligand>
        <name>Zn(2+)</name>
        <dbReference type="ChEBI" id="CHEBI:29105"/>
    </ligand>
</feature>
<feature type="binding site" evidence="1">
    <location>
        <position position="211"/>
    </location>
    <ligand>
        <name>Zn(2+)</name>
        <dbReference type="ChEBI" id="CHEBI:29105"/>
    </ligand>
</feature>
<feature type="binding site" evidence="1">
    <location>
        <position position="236"/>
    </location>
    <ligand>
        <name>Zn(2+)</name>
        <dbReference type="ChEBI" id="CHEBI:29105"/>
    </ligand>
</feature>
<feature type="binding site" evidence="1">
    <location>
        <position position="240"/>
    </location>
    <ligand>
        <name>Zn(2+)</name>
        <dbReference type="ChEBI" id="CHEBI:29105"/>
    </ligand>
</feature>
<feature type="binding site" evidence="1">
    <location>
        <position position="270"/>
    </location>
    <ligand>
        <name>ATP</name>
        <dbReference type="ChEBI" id="CHEBI:30616"/>
    </ligand>
</feature>
<organism>
    <name type="scientific">Mycobacterium tuberculosis (strain CDC 1551 / Oshkosh)</name>
    <dbReference type="NCBI Taxonomy" id="83331"/>
    <lineage>
        <taxon>Bacteria</taxon>
        <taxon>Bacillati</taxon>
        <taxon>Actinomycetota</taxon>
        <taxon>Actinomycetes</taxon>
        <taxon>Mycobacteriales</taxon>
        <taxon>Mycobacteriaceae</taxon>
        <taxon>Mycobacterium</taxon>
        <taxon>Mycobacterium tuberculosis complex</taxon>
    </lineage>
</organism>
<proteinExistence type="inferred from homology"/>
<reference key="1">
    <citation type="journal article" date="2002" name="J. Bacteriol.">
        <title>Whole-genome comparison of Mycobacterium tuberculosis clinical and laboratory strains.</title>
        <authorList>
            <person name="Fleischmann R.D."/>
            <person name="Alland D."/>
            <person name="Eisen J.A."/>
            <person name="Carpenter L."/>
            <person name="White O."/>
            <person name="Peterson J.D."/>
            <person name="DeBoy R.T."/>
            <person name="Dodson R.J."/>
            <person name="Gwinn M.L."/>
            <person name="Haft D.H."/>
            <person name="Hickey E.K."/>
            <person name="Kolonay J.F."/>
            <person name="Nelson W.C."/>
            <person name="Umayam L.A."/>
            <person name="Ermolaeva M.D."/>
            <person name="Salzberg S.L."/>
            <person name="Delcher A."/>
            <person name="Utterback T.R."/>
            <person name="Weidman J.F."/>
            <person name="Khouri H.M."/>
            <person name="Gill J."/>
            <person name="Mikula A."/>
            <person name="Bishai W."/>
            <person name="Jacobs W.R. Jr."/>
            <person name="Venter J.C."/>
            <person name="Fraser C.M."/>
        </authorList>
    </citation>
    <scope>NUCLEOTIDE SEQUENCE [LARGE SCALE GENOMIC DNA]</scope>
    <source>
        <strain>CDC 1551 / Oshkosh</strain>
    </source>
</reference>
<comment type="catalytic activity">
    <reaction>
        <text>tRNA(Cys) + L-cysteine + ATP = L-cysteinyl-tRNA(Cys) + AMP + diphosphate</text>
        <dbReference type="Rhea" id="RHEA:17773"/>
        <dbReference type="Rhea" id="RHEA-COMP:9661"/>
        <dbReference type="Rhea" id="RHEA-COMP:9679"/>
        <dbReference type="ChEBI" id="CHEBI:30616"/>
        <dbReference type="ChEBI" id="CHEBI:33019"/>
        <dbReference type="ChEBI" id="CHEBI:35235"/>
        <dbReference type="ChEBI" id="CHEBI:78442"/>
        <dbReference type="ChEBI" id="CHEBI:78517"/>
        <dbReference type="ChEBI" id="CHEBI:456215"/>
        <dbReference type="EC" id="6.1.1.16"/>
    </reaction>
</comment>
<comment type="cofactor">
    <cofactor evidence="1">
        <name>Zn(2+)</name>
        <dbReference type="ChEBI" id="CHEBI:29105"/>
    </cofactor>
    <text evidence="1">Binds 1 zinc ion per subunit.</text>
</comment>
<comment type="subunit">
    <text evidence="1">Monomer.</text>
</comment>
<comment type="subcellular location">
    <subcellularLocation>
        <location evidence="1">Cytoplasm</location>
    </subcellularLocation>
</comment>
<comment type="similarity">
    <text evidence="2">Belongs to the class-I aminoacyl-tRNA synthetase family.</text>
</comment>
<keyword id="KW-0030">Aminoacyl-tRNA synthetase</keyword>
<keyword id="KW-0067">ATP-binding</keyword>
<keyword id="KW-0963">Cytoplasm</keyword>
<keyword id="KW-0436">Ligase</keyword>
<keyword id="KW-0479">Metal-binding</keyword>
<keyword id="KW-0547">Nucleotide-binding</keyword>
<keyword id="KW-0648">Protein biosynthesis</keyword>
<keyword id="KW-1185">Reference proteome</keyword>
<keyword id="KW-0862">Zinc</keyword>
<accession>P9WFW0</accession>
<accession>L0TCZ2</accession>
<accession>P0A634</accession>
<accession>P96862</accession>